<feature type="chain" id="PRO_1000205507" description="DNA replication and repair protein RecF">
    <location>
        <begin position="1"/>
        <end position="378"/>
    </location>
</feature>
<feature type="binding site" evidence="1">
    <location>
        <begin position="31"/>
        <end position="38"/>
    </location>
    <ligand>
        <name>ATP</name>
        <dbReference type="ChEBI" id="CHEBI:30616"/>
    </ligand>
</feature>
<accession>C5BKM1</accession>
<keyword id="KW-0067">ATP-binding</keyword>
<keyword id="KW-0963">Cytoplasm</keyword>
<keyword id="KW-0227">DNA damage</keyword>
<keyword id="KW-0234">DNA repair</keyword>
<keyword id="KW-0235">DNA replication</keyword>
<keyword id="KW-0238">DNA-binding</keyword>
<keyword id="KW-0547">Nucleotide-binding</keyword>
<keyword id="KW-1185">Reference proteome</keyword>
<keyword id="KW-0742">SOS response</keyword>
<sequence length="378" mass="42947">MPTLRRLDISEFRNLRSATLQPGEGINLISGENGSGKTSILESISVLAHGRSFRTHKFRRLINNDEKSFTLFGQIFEGTTRNIGLSRASNGDIQIRIDSKAAHTATELAECLPLLVMNSASFQLLEGSGQVRRKFFDWLVFHVKQEFKHYWKLYARCIKQRNSLLRRDKITRSELLPWDQELTKAAQHIESMRSEVFELFQTHFLNEIGQFDFTETLGAELSCTYVSGWSKTGNYNEQLEDQFERDVAAGYTHIGSHKSDVKINLARVPAVEELSRGQQKSVIVALFLAEALVFRTTTGRTPVFLLDDLPAELDEKNLRIVGKALKNLGSQVFATAIDPKSILTGWELVDDESLRMFHVKHGQVELKNDITLRDSFLL</sequence>
<dbReference type="EMBL" id="CP001614">
    <property type="protein sequence ID" value="ACR13820.1"/>
    <property type="molecule type" value="Genomic_DNA"/>
</dbReference>
<dbReference type="RefSeq" id="WP_015819935.1">
    <property type="nucleotide sequence ID" value="NC_012997.1"/>
</dbReference>
<dbReference type="SMR" id="C5BKM1"/>
<dbReference type="STRING" id="377629.TERTU_0004"/>
<dbReference type="KEGG" id="ttu:TERTU_0004"/>
<dbReference type="eggNOG" id="COG1195">
    <property type="taxonomic scope" value="Bacteria"/>
</dbReference>
<dbReference type="HOGENOM" id="CLU_040267_0_0_6"/>
<dbReference type="OrthoDB" id="9803889at2"/>
<dbReference type="Proteomes" id="UP000009080">
    <property type="component" value="Chromosome"/>
</dbReference>
<dbReference type="GO" id="GO:0005737">
    <property type="term" value="C:cytoplasm"/>
    <property type="evidence" value="ECO:0007669"/>
    <property type="project" value="UniProtKB-SubCell"/>
</dbReference>
<dbReference type="GO" id="GO:0005524">
    <property type="term" value="F:ATP binding"/>
    <property type="evidence" value="ECO:0007669"/>
    <property type="project" value="UniProtKB-UniRule"/>
</dbReference>
<dbReference type="GO" id="GO:0003697">
    <property type="term" value="F:single-stranded DNA binding"/>
    <property type="evidence" value="ECO:0007669"/>
    <property type="project" value="UniProtKB-UniRule"/>
</dbReference>
<dbReference type="GO" id="GO:0006260">
    <property type="term" value="P:DNA replication"/>
    <property type="evidence" value="ECO:0007669"/>
    <property type="project" value="UniProtKB-UniRule"/>
</dbReference>
<dbReference type="GO" id="GO:0000731">
    <property type="term" value="P:DNA synthesis involved in DNA repair"/>
    <property type="evidence" value="ECO:0007669"/>
    <property type="project" value="TreeGrafter"/>
</dbReference>
<dbReference type="GO" id="GO:0006302">
    <property type="term" value="P:double-strand break repair"/>
    <property type="evidence" value="ECO:0007669"/>
    <property type="project" value="TreeGrafter"/>
</dbReference>
<dbReference type="GO" id="GO:0009432">
    <property type="term" value="P:SOS response"/>
    <property type="evidence" value="ECO:0007669"/>
    <property type="project" value="UniProtKB-UniRule"/>
</dbReference>
<dbReference type="Gene3D" id="3.40.50.300">
    <property type="entry name" value="P-loop containing nucleotide triphosphate hydrolases"/>
    <property type="match status" value="1"/>
</dbReference>
<dbReference type="Gene3D" id="1.20.1050.90">
    <property type="entry name" value="RecF/RecN/SMC, N-terminal domain"/>
    <property type="match status" value="1"/>
</dbReference>
<dbReference type="HAMAP" id="MF_00365">
    <property type="entry name" value="RecF"/>
    <property type="match status" value="1"/>
</dbReference>
<dbReference type="InterPro" id="IPR001238">
    <property type="entry name" value="DNA-binding_RecF"/>
</dbReference>
<dbReference type="InterPro" id="IPR027417">
    <property type="entry name" value="P-loop_NTPase"/>
</dbReference>
<dbReference type="InterPro" id="IPR003395">
    <property type="entry name" value="RecF/RecN/SMC_N"/>
</dbReference>
<dbReference type="InterPro" id="IPR042174">
    <property type="entry name" value="RecF_2"/>
</dbReference>
<dbReference type="NCBIfam" id="TIGR00611">
    <property type="entry name" value="recf"/>
    <property type="match status" value="1"/>
</dbReference>
<dbReference type="PANTHER" id="PTHR32182">
    <property type="entry name" value="DNA REPLICATION AND REPAIR PROTEIN RECF"/>
    <property type="match status" value="1"/>
</dbReference>
<dbReference type="PANTHER" id="PTHR32182:SF0">
    <property type="entry name" value="DNA REPLICATION AND REPAIR PROTEIN RECF"/>
    <property type="match status" value="1"/>
</dbReference>
<dbReference type="Pfam" id="PF02463">
    <property type="entry name" value="SMC_N"/>
    <property type="match status" value="1"/>
</dbReference>
<dbReference type="SUPFAM" id="SSF52540">
    <property type="entry name" value="P-loop containing nucleoside triphosphate hydrolases"/>
    <property type="match status" value="1"/>
</dbReference>
<comment type="function">
    <text evidence="1">The RecF protein is involved in DNA metabolism; it is required for DNA replication and normal SOS inducibility. RecF binds preferentially to single-stranded, linear DNA. It also seems to bind ATP.</text>
</comment>
<comment type="subcellular location">
    <subcellularLocation>
        <location evidence="1">Cytoplasm</location>
    </subcellularLocation>
</comment>
<comment type="similarity">
    <text evidence="1">Belongs to the RecF family.</text>
</comment>
<name>RECF_TERTT</name>
<evidence type="ECO:0000255" key="1">
    <source>
        <dbReference type="HAMAP-Rule" id="MF_00365"/>
    </source>
</evidence>
<protein>
    <recommendedName>
        <fullName evidence="1">DNA replication and repair protein RecF</fullName>
    </recommendedName>
</protein>
<proteinExistence type="inferred from homology"/>
<reference key="1">
    <citation type="journal article" date="2009" name="PLoS ONE">
        <title>The complete genome of Teredinibacter turnerae T7901: an intracellular endosymbiont of marine wood-boring bivalves (shipworms).</title>
        <authorList>
            <person name="Yang J.C."/>
            <person name="Madupu R."/>
            <person name="Durkin A.S."/>
            <person name="Ekborg N.A."/>
            <person name="Pedamallu C.S."/>
            <person name="Hostetler J.B."/>
            <person name="Radune D."/>
            <person name="Toms B.S."/>
            <person name="Henrissat B."/>
            <person name="Coutinho P.M."/>
            <person name="Schwarz S."/>
            <person name="Field L."/>
            <person name="Trindade-Silva A.E."/>
            <person name="Soares C.A.G."/>
            <person name="Elshahawi S."/>
            <person name="Hanora A."/>
            <person name="Schmidt E.W."/>
            <person name="Haygood M.G."/>
            <person name="Posfai J."/>
            <person name="Benner J."/>
            <person name="Madinger C."/>
            <person name="Nove J."/>
            <person name="Anton B."/>
            <person name="Chaudhary K."/>
            <person name="Foster J."/>
            <person name="Holman A."/>
            <person name="Kumar S."/>
            <person name="Lessard P.A."/>
            <person name="Luyten Y.A."/>
            <person name="Slatko B."/>
            <person name="Wood N."/>
            <person name="Wu B."/>
            <person name="Teplitski M."/>
            <person name="Mougous J.D."/>
            <person name="Ward N."/>
            <person name="Eisen J.A."/>
            <person name="Badger J.H."/>
            <person name="Distel D.L."/>
        </authorList>
    </citation>
    <scope>NUCLEOTIDE SEQUENCE [LARGE SCALE GENOMIC DNA]</scope>
    <source>
        <strain>ATCC 39867 / T7901</strain>
    </source>
</reference>
<gene>
    <name evidence="1" type="primary">recF</name>
    <name type="ordered locus">TERTU_0004</name>
</gene>
<organism>
    <name type="scientific">Teredinibacter turnerae (strain ATCC 39867 / T7901)</name>
    <dbReference type="NCBI Taxonomy" id="377629"/>
    <lineage>
        <taxon>Bacteria</taxon>
        <taxon>Pseudomonadati</taxon>
        <taxon>Pseudomonadota</taxon>
        <taxon>Gammaproteobacteria</taxon>
        <taxon>Cellvibrionales</taxon>
        <taxon>Cellvibrionaceae</taxon>
        <taxon>Teredinibacter</taxon>
    </lineage>
</organism>